<keyword id="KW-0067">ATP-binding</keyword>
<keyword id="KW-0143">Chaperone</keyword>
<keyword id="KW-0963">Cytoplasm</keyword>
<keyword id="KW-0547">Nucleotide-binding</keyword>
<keyword id="KW-1185">Reference proteome</keyword>
<keyword id="KW-0346">Stress response</keyword>
<reference key="1">
    <citation type="submission" date="2006-03" db="EMBL/GenBank/DDBJ databases">
        <title>Complete genome sequence of Francisella tularensis LVS (Live Vaccine Strain).</title>
        <authorList>
            <person name="Chain P."/>
            <person name="Larimer F."/>
            <person name="Land M."/>
            <person name="Stilwagen S."/>
            <person name="Larsson P."/>
            <person name="Bearden S."/>
            <person name="Chu M."/>
            <person name="Oyston P."/>
            <person name="Forsman M."/>
            <person name="Andersson S."/>
            <person name="Lindler L."/>
            <person name="Titball R."/>
            <person name="Garcia E."/>
        </authorList>
    </citation>
    <scope>NUCLEOTIDE SEQUENCE [LARGE SCALE GENOMIC DNA]</scope>
    <source>
        <strain>LVS</strain>
    </source>
</reference>
<feature type="chain" id="PRO_0000258512" description="Chaperone protein HtpG">
    <location>
        <begin position="1"/>
        <end position="628"/>
    </location>
</feature>
<feature type="region of interest" description="A; substrate-binding" evidence="1">
    <location>
        <begin position="1"/>
        <end position="337"/>
    </location>
</feature>
<feature type="region of interest" description="B" evidence="1">
    <location>
        <begin position="338"/>
        <end position="554"/>
    </location>
</feature>
<feature type="region of interest" description="C" evidence="1">
    <location>
        <begin position="555"/>
        <end position="628"/>
    </location>
</feature>
<organism>
    <name type="scientific">Francisella tularensis subsp. holarctica (strain LVS)</name>
    <dbReference type="NCBI Taxonomy" id="376619"/>
    <lineage>
        <taxon>Bacteria</taxon>
        <taxon>Pseudomonadati</taxon>
        <taxon>Pseudomonadota</taxon>
        <taxon>Gammaproteobacteria</taxon>
        <taxon>Thiotrichales</taxon>
        <taxon>Francisellaceae</taxon>
        <taxon>Francisella</taxon>
    </lineage>
</organism>
<evidence type="ECO:0000255" key="1">
    <source>
        <dbReference type="HAMAP-Rule" id="MF_00505"/>
    </source>
</evidence>
<gene>
    <name evidence="1" type="primary">htpG</name>
    <name type="ordered locus">FTL_0267</name>
</gene>
<dbReference type="EMBL" id="AM233362">
    <property type="protein sequence ID" value="CAJ78708.1"/>
    <property type="molecule type" value="Genomic_DNA"/>
</dbReference>
<dbReference type="RefSeq" id="WP_003014393.1">
    <property type="nucleotide sequence ID" value="NZ_CP009694.1"/>
</dbReference>
<dbReference type="SMR" id="Q2A5E0"/>
<dbReference type="KEGG" id="ftl:FTL_0267"/>
<dbReference type="Proteomes" id="UP000001944">
    <property type="component" value="Chromosome"/>
</dbReference>
<dbReference type="GO" id="GO:0005737">
    <property type="term" value="C:cytoplasm"/>
    <property type="evidence" value="ECO:0007669"/>
    <property type="project" value="UniProtKB-SubCell"/>
</dbReference>
<dbReference type="GO" id="GO:0005524">
    <property type="term" value="F:ATP binding"/>
    <property type="evidence" value="ECO:0007669"/>
    <property type="project" value="UniProtKB-UniRule"/>
</dbReference>
<dbReference type="GO" id="GO:0016887">
    <property type="term" value="F:ATP hydrolysis activity"/>
    <property type="evidence" value="ECO:0007669"/>
    <property type="project" value="InterPro"/>
</dbReference>
<dbReference type="GO" id="GO:0140662">
    <property type="term" value="F:ATP-dependent protein folding chaperone"/>
    <property type="evidence" value="ECO:0007669"/>
    <property type="project" value="InterPro"/>
</dbReference>
<dbReference type="GO" id="GO:0051082">
    <property type="term" value="F:unfolded protein binding"/>
    <property type="evidence" value="ECO:0007669"/>
    <property type="project" value="UniProtKB-UniRule"/>
</dbReference>
<dbReference type="CDD" id="cd16927">
    <property type="entry name" value="HATPase_Hsp90-like"/>
    <property type="match status" value="1"/>
</dbReference>
<dbReference type="FunFam" id="3.30.230.80:FF:000002">
    <property type="entry name" value="Molecular chaperone HtpG"/>
    <property type="match status" value="1"/>
</dbReference>
<dbReference type="FunFam" id="3.30.565.10:FF:000009">
    <property type="entry name" value="Molecular chaperone HtpG"/>
    <property type="match status" value="1"/>
</dbReference>
<dbReference type="Gene3D" id="3.30.230.80">
    <property type="match status" value="1"/>
</dbReference>
<dbReference type="Gene3D" id="3.40.50.11260">
    <property type="match status" value="1"/>
</dbReference>
<dbReference type="Gene3D" id="1.20.120.790">
    <property type="entry name" value="Heat shock protein 90, C-terminal domain"/>
    <property type="match status" value="1"/>
</dbReference>
<dbReference type="Gene3D" id="3.30.565.10">
    <property type="entry name" value="Histidine kinase-like ATPase, C-terminal domain"/>
    <property type="match status" value="1"/>
</dbReference>
<dbReference type="HAMAP" id="MF_00505">
    <property type="entry name" value="HSP90"/>
    <property type="match status" value="1"/>
</dbReference>
<dbReference type="InterPro" id="IPR036890">
    <property type="entry name" value="HATPase_C_sf"/>
</dbReference>
<dbReference type="InterPro" id="IPR019805">
    <property type="entry name" value="Heat_shock_protein_90_CS"/>
</dbReference>
<dbReference type="InterPro" id="IPR037196">
    <property type="entry name" value="HSP90_C"/>
</dbReference>
<dbReference type="InterPro" id="IPR001404">
    <property type="entry name" value="Hsp90_fam"/>
</dbReference>
<dbReference type="InterPro" id="IPR020575">
    <property type="entry name" value="Hsp90_N"/>
</dbReference>
<dbReference type="InterPro" id="IPR020568">
    <property type="entry name" value="Ribosomal_Su5_D2-typ_SF"/>
</dbReference>
<dbReference type="NCBIfam" id="NF003555">
    <property type="entry name" value="PRK05218.1"/>
    <property type="match status" value="1"/>
</dbReference>
<dbReference type="PANTHER" id="PTHR11528">
    <property type="entry name" value="HEAT SHOCK PROTEIN 90 FAMILY MEMBER"/>
    <property type="match status" value="1"/>
</dbReference>
<dbReference type="Pfam" id="PF13589">
    <property type="entry name" value="HATPase_c_3"/>
    <property type="match status" value="1"/>
</dbReference>
<dbReference type="Pfam" id="PF00183">
    <property type="entry name" value="HSP90"/>
    <property type="match status" value="1"/>
</dbReference>
<dbReference type="PIRSF" id="PIRSF002583">
    <property type="entry name" value="Hsp90"/>
    <property type="match status" value="1"/>
</dbReference>
<dbReference type="PRINTS" id="PR00775">
    <property type="entry name" value="HEATSHOCK90"/>
</dbReference>
<dbReference type="SMART" id="SM00387">
    <property type="entry name" value="HATPase_c"/>
    <property type="match status" value="1"/>
</dbReference>
<dbReference type="SUPFAM" id="SSF55874">
    <property type="entry name" value="ATPase domain of HSP90 chaperone/DNA topoisomerase II/histidine kinase"/>
    <property type="match status" value="1"/>
</dbReference>
<dbReference type="SUPFAM" id="SSF110942">
    <property type="entry name" value="HSP90 C-terminal domain"/>
    <property type="match status" value="1"/>
</dbReference>
<dbReference type="SUPFAM" id="SSF54211">
    <property type="entry name" value="Ribosomal protein S5 domain 2-like"/>
    <property type="match status" value="1"/>
</dbReference>
<dbReference type="PROSITE" id="PS00298">
    <property type="entry name" value="HSP90"/>
    <property type="match status" value="1"/>
</dbReference>
<protein>
    <recommendedName>
        <fullName evidence="1">Chaperone protein HtpG</fullName>
    </recommendedName>
    <alternativeName>
        <fullName evidence="1">Heat shock protein HtpG</fullName>
    </alternativeName>
    <alternativeName>
        <fullName evidence="1">High temperature protein G</fullName>
    </alternativeName>
</protein>
<comment type="function">
    <text evidence="1">Molecular chaperone. Has ATPase activity.</text>
</comment>
<comment type="subunit">
    <text evidence="1">Homodimer.</text>
</comment>
<comment type="subcellular location">
    <subcellularLocation>
        <location evidence="1">Cytoplasm</location>
    </subcellularLocation>
</comment>
<comment type="similarity">
    <text evidence="1">Belongs to the heat shock protein 90 family.</text>
</comment>
<name>HTPG_FRATH</name>
<proteinExistence type="inferred from homology"/>
<sequence>MSEKKYTFETEVDKLLHLVIHSLYSNREIFLRELVSNSSDAIEKLRYESISNAALNEDDTDYAIRIDFDKDAKTITVSDNGIGMTEEEVIENLGTIAKSGTKKFLESLTGDKSKDNELIGQFGVGFYSSFIVADKVTVRTRKAGQDKSQATKWVSDAQNGFTVEIITKEKRGTEVILHIKKEHLDLLEYHVLKGLVNKYSDCINTPIQMKKVEYDKDGKQTVKDEYETVNNTKAIWLRSKGEVTNEEYQEFYKYISHDFADALMWIHNKVEGNLEYNSLLYIPQNKPFDFWNRDKDYGLSLYVRRVFIMENKELLPPYLRFVKGVIDSADLPLNVSREILQHNKVIDKIKKAITTKILSELKKLASKDKEKYQKFWDSFGQVLKEGVSDDYSNKEKIAGLLRFATTQSGDSKQTVSLADYISRMKESQDTIYYITSDSYKAAANNPQLEAFKKKGIEVILMTDRIDEWMMSTLTEFDDKHMKSIIKGDIDLDKFETPENKEKFEKEAKDFEKVLKEIKEVLKDKVEDVRLSKRLTDSPSCVVVNDYGMSLHMQKMMEEAGQSFMPGMGMKPILELNAEHNLVQKLKNEADTEIFADLSELLLLQAMFVEGAKIEDPMAFVKLVNKYIR</sequence>
<accession>Q2A5E0</accession>